<organism>
    <name type="scientific">Pseudomonas putida</name>
    <name type="common">Arthrobacter siderocapsulatus</name>
    <dbReference type="NCBI Taxonomy" id="303"/>
    <lineage>
        <taxon>Bacteria</taxon>
        <taxon>Pseudomonadati</taxon>
        <taxon>Pseudomonadota</taxon>
        <taxon>Gammaproteobacteria</taxon>
        <taxon>Pseudomonadales</taxon>
        <taxon>Pseudomonadaceae</taxon>
        <taxon>Pseudomonas</taxon>
    </lineage>
</organism>
<sequence>MDKTLINELGDELYQAMVQRETVTPLTSRGFDISVEDAYHISLRMLERRLAAGERVIGKKIGVTSKAVQNMLGVHQPDFGYLTDAMVYNSGEAMPISEKLIQPRAEGEIAFILKKDLMGPGVTNADVLAATECVIPCFEVVDSRIQDWKIKIQDTVADNASCGLFVLGDQAVSPRQVDLVTCGMLVEKNGQLLSTGAGAAALGSPVNCVAWLANTLGHFGIA</sequence>
<feature type="chain" id="PRO_0000066055" description="2-hydroxypent-2,4-dienoate hydratase">
    <location>
        <begin position="1"/>
        <end position="222"/>
    </location>
</feature>
<name>XYLJ_PSEPU</name>
<gene>
    <name type="primary">xylJ</name>
</gene>
<evidence type="ECO:0000305" key="1"/>
<keyword id="KW-0058">Aromatic hydrocarbons catabolism</keyword>
<keyword id="KW-0903">Direct protein sequencing</keyword>
<keyword id="KW-0456">Lyase</keyword>
<keyword id="KW-0614">Plasmid</keyword>
<geneLocation type="plasmid">
    <name>TOL pWW0</name>
</geneLocation>
<protein>
    <recommendedName>
        <fullName>2-hydroxypent-2,4-dienoate hydratase</fullName>
        <shortName>HPH</shortName>
        <ecNumber>4.2.-.-</ecNumber>
    </recommendedName>
    <alternativeName>
        <fullName>2-oxopent-4-enoate hydratase</fullName>
    </alternativeName>
</protein>
<accession>P23107</accession>
<reference key="1">
    <citation type="journal article" date="1991" name="Mol. Microbiol.">
        <title>DNA sequence determination of the TOL plasmid (pWWO) xylGFJ genes of Pseudomonas putida: implications for the evolution of aromatic catabolism.</title>
        <authorList>
            <person name="Horn J.M."/>
            <person name="Harayama S."/>
            <person name="Timmis K.N."/>
        </authorList>
    </citation>
    <scope>NUCLEOTIDE SEQUENCE [GENOMIC DNA]</scope>
    <scope>PROTEIN SEQUENCE OF 1-22</scope>
</reference>
<proteinExistence type="evidence at protein level"/>
<dbReference type="EC" id="4.2.-.-"/>
<dbReference type="EMBL" id="M64747">
    <property type="protein sequence ID" value="AAA26055.1"/>
    <property type="molecule type" value="Genomic_DNA"/>
</dbReference>
<dbReference type="PIR" id="S18246">
    <property type="entry name" value="S18246"/>
</dbReference>
<dbReference type="RefSeq" id="NP_542863.1">
    <property type="nucleotide sequence ID" value="NC_003350.1"/>
</dbReference>
<dbReference type="SMR" id="P23107"/>
<dbReference type="BioCyc" id="MetaCyc:MONOMER-3403"/>
<dbReference type="UniPathway" id="UPA00156"/>
<dbReference type="GO" id="GO:0005737">
    <property type="term" value="C:cytoplasm"/>
    <property type="evidence" value="ECO:0007669"/>
    <property type="project" value="TreeGrafter"/>
</dbReference>
<dbReference type="GO" id="GO:0008684">
    <property type="term" value="F:2-oxopent-4-enoate hydratase activity"/>
    <property type="evidence" value="ECO:0007669"/>
    <property type="project" value="TreeGrafter"/>
</dbReference>
<dbReference type="GO" id="GO:0043640">
    <property type="term" value="P:benzoate catabolic process via hydroxylation"/>
    <property type="evidence" value="ECO:0007669"/>
    <property type="project" value="UniProtKB-UniPathway"/>
</dbReference>
<dbReference type="Gene3D" id="3.90.850.10">
    <property type="entry name" value="Fumarylacetoacetase-like, C-terminal domain"/>
    <property type="match status" value="1"/>
</dbReference>
<dbReference type="InterPro" id="IPR011234">
    <property type="entry name" value="Fumarylacetoacetase-like_C"/>
</dbReference>
<dbReference type="InterPro" id="IPR036663">
    <property type="entry name" value="Fumarylacetoacetase_C_sf"/>
</dbReference>
<dbReference type="InterPro" id="IPR050772">
    <property type="entry name" value="Hydratase-Decarb/MhpD_sf"/>
</dbReference>
<dbReference type="PANTHER" id="PTHR30143:SF0">
    <property type="entry name" value="2-KETO-4-PENTENOATE HYDRATASE"/>
    <property type="match status" value="1"/>
</dbReference>
<dbReference type="PANTHER" id="PTHR30143">
    <property type="entry name" value="ACID HYDRATASE"/>
    <property type="match status" value="1"/>
</dbReference>
<dbReference type="Pfam" id="PF01557">
    <property type="entry name" value="FAA_hydrolase"/>
    <property type="match status" value="1"/>
</dbReference>
<dbReference type="SUPFAM" id="SSF56529">
    <property type="entry name" value="FAH"/>
    <property type="match status" value="1"/>
</dbReference>
<comment type="function">
    <text>Conversion of 2-hydroxypent-2,4-dienoate into 4-hydroxy-2-oxopentanoate.</text>
</comment>
<comment type="pathway">
    <text>Aromatic compound metabolism; benzoate degradation via hydroxylation.</text>
</comment>
<comment type="similarity">
    <text evidence="1">Belongs to the hydratase/decarboxylase family.</text>
</comment>